<keyword id="KW-0210">Decarboxylase</keyword>
<keyword id="KW-0456">Lyase</keyword>
<keyword id="KW-0663">Pyridoxal phosphate</keyword>
<gene>
    <name evidence="1" type="primary">hdc</name>
    <name type="ordered locus">ABBFA_001064</name>
</gene>
<evidence type="ECO:0000255" key="1">
    <source>
        <dbReference type="HAMAP-Rule" id="MF_00609"/>
    </source>
</evidence>
<name>DCHS_ACIB3</name>
<organism>
    <name type="scientific">Acinetobacter baumannii (strain AB307-0294)</name>
    <dbReference type="NCBI Taxonomy" id="557600"/>
    <lineage>
        <taxon>Bacteria</taxon>
        <taxon>Pseudomonadati</taxon>
        <taxon>Pseudomonadota</taxon>
        <taxon>Gammaproteobacteria</taxon>
        <taxon>Moraxellales</taxon>
        <taxon>Moraxellaceae</taxon>
        <taxon>Acinetobacter</taxon>
        <taxon>Acinetobacter calcoaceticus/baumannii complex</taxon>
    </lineage>
</organism>
<protein>
    <recommendedName>
        <fullName evidence="1">Histidine decarboxylase</fullName>
        <shortName evidence="1">HDC</shortName>
        <ecNumber evidence="1">4.1.1.22</ecNumber>
    </recommendedName>
</protein>
<reference key="1">
    <citation type="journal article" date="2008" name="J. Bacteriol.">
        <title>Comparative genome sequence analysis of multidrug-resistant Acinetobacter baumannii.</title>
        <authorList>
            <person name="Adams M.D."/>
            <person name="Goglin K."/>
            <person name="Molyneaux N."/>
            <person name="Hujer K.M."/>
            <person name="Lavender H."/>
            <person name="Jamison J.J."/>
            <person name="MacDonald I.J."/>
            <person name="Martin K.M."/>
            <person name="Russo T."/>
            <person name="Campagnari A.A."/>
            <person name="Hujer A.M."/>
            <person name="Bonomo R.A."/>
            <person name="Gill S.R."/>
        </authorList>
    </citation>
    <scope>NUCLEOTIDE SEQUENCE [LARGE SCALE GENOMIC DNA]</scope>
    <source>
        <strain>AB307-0294</strain>
    </source>
</reference>
<dbReference type="EC" id="4.1.1.22" evidence="1"/>
<dbReference type="EMBL" id="CP001172">
    <property type="protein sequence ID" value="ACJ56322.1"/>
    <property type="molecule type" value="Genomic_DNA"/>
</dbReference>
<dbReference type="SMR" id="B7GZJ8"/>
<dbReference type="HOGENOM" id="CLU_028929_0_2_6"/>
<dbReference type="Proteomes" id="UP000006924">
    <property type="component" value="Chromosome"/>
</dbReference>
<dbReference type="GO" id="GO:0004398">
    <property type="term" value="F:histidine decarboxylase activity"/>
    <property type="evidence" value="ECO:0007669"/>
    <property type="project" value="UniProtKB-UniRule"/>
</dbReference>
<dbReference type="GO" id="GO:0030170">
    <property type="term" value="F:pyridoxal phosphate binding"/>
    <property type="evidence" value="ECO:0007669"/>
    <property type="project" value="InterPro"/>
</dbReference>
<dbReference type="GO" id="GO:0019752">
    <property type="term" value="P:carboxylic acid metabolic process"/>
    <property type="evidence" value="ECO:0007669"/>
    <property type="project" value="InterPro"/>
</dbReference>
<dbReference type="Gene3D" id="3.40.640.10">
    <property type="entry name" value="Type I PLP-dependent aspartate aminotransferase-like (Major domain)"/>
    <property type="match status" value="1"/>
</dbReference>
<dbReference type="HAMAP" id="MF_00609">
    <property type="entry name" value="Pyridoxal_decarbox"/>
    <property type="match status" value="1"/>
</dbReference>
<dbReference type="InterPro" id="IPR051151">
    <property type="entry name" value="Group_II_Decarboxylase"/>
</dbReference>
<dbReference type="InterPro" id="IPR023523">
    <property type="entry name" value="Hist_deCOase_bac"/>
</dbReference>
<dbReference type="InterPro" id="IPR002129">
    <property type="entry name" value="PyrdxlP-dep_de-COase"/>
</dbReference>
<dbReference type="InterPro" id="IPR015424">
    <property type="entry name" value="PyrdxlP-dep_Trfase"/>
</dbReference>
<dbReference type="InterPro" id="IPR015421">
    <property type="entry name" value="PyrdxlP-dep_Trfase_major"/>
</dbReference>
<dbReference type="InterPro" id="IPR021115">
    <property type="entry name" value="Pyridoxal-P_BS"/>
</dbReference>
<dbReference type="NCBIfam" id="NF002748">
    <property type="entry name" value="PRK02769.1"/>
    <property type="match status" value="1"/>
</dbReference>
<dbReference type="PANTHER" id="PTHR46101">
    <property type="match status" value="1"/>
</dbReference>
<dbReference type="PANTHER" id="PTHR46101:SF2">
    <property type="entry name" value="SERINE DECARBOXYLASE"/>
    <property type="match status" value="1"/>
</dbReference>
<dbReference type="Pfam" id="PF00282">
    <property type="entry name" value="Pyridoxal_deC"/>
    <property type="match status" value="1"/>
</dbReference>
<dbReference type="SUPFAM" id="SSF53383">
    <property type="entry name" value="PLP-dependent transferases"/>
    <property type="match status" value="1"/>
</dbReference>
<dbReference type="PROSITE" id="PS00392">
    <property type="entry name" value="DDC_GAD_HDC_YDC"/>
    <property type="match status" value="1"/>
</dbReference>
<sequence>MILSPADQERIETFWNYCLKHQYFNIGYPESADFDYSALFRFFKFSINNCGDWKDYSNYALNSFDFEKDVMAYFAEIFQIPFEESWGYVTNGGTEGNMFGCYLARELFSDSTLYYSKDTHYSVGKIAKLLQMKSCVIESLDNGEIDYDDLIHKIKTNKESHPIIFANIGTTMTGAIDDIEMIQERLAQIGIMRRDYYIHADAALSGMILPFVDHPQAFSFAHGIDSICVSGHKMIGSPIPCGIVVAKRQNVERISVDVDYISTRDQTISGSRNGHTVLLMWAAIRSQTNLQRRQRIQHCLKMAQYAVDRFQAVGIPAWRNPNSITVVFPCPSEHIWKKHYLATSGNMAHLITTAHHRDTRQIDSLIDDVIFDLQGASKRTVGF</sequence>
<accession>B7GZJ8</accession>
<proteinExistence type="inferred from homology"/>
<comment type="catalytic activity">
    <reaction evidence="1">
        <text>L-histidine + H(+) = histamine + CO2</text>
        <dbReference type="Rhea" id="RHEA:20840"/>
        <dbReference type="ChEBI" id="CHEBI:15378"/>
        <dbReference type="ChEBI" id="CHEBI:16526"/>
        <dbReference type="ChEBI" id="CHEBI:57595"/>
        <dbReference type="ChEBI" id="CHEBI:58432"/>
        <dbReference type="EC" id="4.1.1.22"/>
    </reaction>
</comment>
<comment type="cofactor">
    <cofactor evidence="1">
        <name>pyridoxal 5'-phosphate</name>
        <dbReference type="ChEBI" id="CHEBI:597326"/>
    </cofactor>
</comment>
<comment type="subunit">
    <text evidence="1">Homotetramer.</text>
</comment>
<comment type="similarity">
    <text evidence="1">Belongs to the group II decarboxylase family.</text>
</comment>
<feature type="chain" id="PRO_1000130344" description="Histidine decarboxylase">
    <location>
        <begin position="1"/>
        <end position="383"/>
    </location>
</feature>
<feature type="binding site" evidence="1">
    <location>
        <position position="120"/>
    </location>
    <ligand>
        <name>substrate</name>
    </ligand>
</feature>
<feature type="modified residue" description="N6-(pyridoxal phosphate)lysine" evidence="1">
    <location>
        <position position="233"/>
    </location>
</feature>